<gene>
    <name type="primary">AC58</name>
</gene>
<name>ACT3_SOLTU</name>
<feature type="chain" id="PRO_0000089010" description="Actin-58">
    <location>
        <begin position="1"/>
        <end position="377"/>
    </location>
</feature>
<reference key="1">
    <citation type="journal article" date="1990" name="J. Mol. Evol.">
        <title>Independent gene evolution in the potato actin gene family demonstrated by phylogenetic procedures for resolving gene conversions and the phylogeny of angiosperm actin genes.</title>
        <authorList>
            <person name="Drouin G."/>
            <person name="Dover G.A."/>
        </authorList>
    </citation>
    <scope>NUCLEOTIDE SEQUENCE [GENOMIC DNA]</scope>
    <source>
        <strain>cv. Maris Piper</strain>
        <tissue>Leaf</tissue>
    </source>
</reference>
<proteinExistence type="inferred from homology"/>
<keyword id="KW-0067">ATP-binding</keyword>
<keyword id="KW-0963">Cytoplasm</keyword>
<keyword id="KW-0206">Cytoskeleton</keyword>
<keyword id="KW-0378">Hydrolase</keyword>
<keyword id="KW-0547">Nucleotide-binding</keyword>
<keyword id="KW-1185">Reference proteome</keyword>
<sequence>MAEGEDIQPLVCDNGTGMVKAGFAGDDAPRAVFPRIVGRPRHTGVMVGMGQKDAYVGDEAQSKRGILTLKYPIEHGIVSNWDDMEKIWHHTFYNELRVAPEEHPVLLTEAPLNPKANREKMTQIMFETFNTPAMYVAIQAVLSLYASGRTTGIVLDSGDGVSHTVPIYEGYALPHAILRLDLAGRDLTDHLMKILTERGYSFTTTAEREIVRDVKEKLSYIALDFEQELETSKTSSSVEKSYELPDGQVITIGAERFRCPEVLFQPSLIGMEAAGIHETTYNSIMKCDVDIRKDLYGNIVLSGGTTMFPGIADRMSKELTALAPSSMKIKVVAPPERKYSVWIGGSILASLSTFQQMWIAKAEYDESGPSIVHRKCF</sequence>
<accession>P30167</accession>
<evidence type="ECO:0000250" key="1">
    <source>
        <dbReference type="UniProtKB" id="P68137"/>
    </source>
</evidence>
<evidence type="ECO:0000305" key="2"/>
<dbReference type="EC" id="3.6.4.-" evidence="1"/>
<dbReference type="EMBL" id="X55749">
    <property type="protein sequence ID" value="CAA39278.1"/>
    <property type="molecule type" value="Genomic_DNA"/>
</dbReference>
<dbReference type="PIR" id="S20094">
    <property type="entry name" value="S20094"/>
</dbReference>
<dbReference type="SMR" id="P30167"/>
<dbReference type="FunCoup" id="P30167">
    <property type="interactions" value="1257"/>
</dbReference>
<dbReference type="STRING" id="4113.P30167"/>
<dbReference type="PaxDb" id="4113-PGSC0003DMT400060225"/>
<dbReference type="eggNOG" id="KOG0676">
    <property type="taxonomic scope" value="Eukaryota"/>
</dbReference>
<dbReference type="InParanoid" id="P30167"/>
<dbReference type="Proteomes" id="UP000011115">
    <property type="component" value="Unassembled WGS sequence"/>
</dbReference>
<dbReference type="ExpressionAtlas" id="P30167">
    <property type="expression patterns" value="baseline and differential"/>
</dbReference>
<dbReference type="GO" id="GO:0015629">
    <property type="term" value="C:actin cytoskeleton"/>
    <property type="evidence" value="ECO:0000318"/>
    <property type="project" value="GO_Central"/>
</dbReference>
<dbReference type="GO" id="GO:0005737">
    <property type="term" value="C:cytoplasm"/>
    <property type="evidence" value="ECO:0007669"/>
    <property type="project" value="UniProtKB-KW"/>
</dbReference>
<dbReference type="GO" id="GO:0005524">
    <property type="term" value="F:ATP binding"/>
    <property type="evidence" value="ECO:0007669"/>
    <property type="project" value="UniProtKB-KW"/>
</dbReference>
<dbReference type="GO" id="GO:0016787">
    <property type="term" value="F:hydrolase activity"/>
    <property type="evidence" value="ECO:0007669"/>
    <property type="project" value="UniProtKB-KW"/>
</dbReference>
<dbReference type="CDD" id="cd10224">
    <property type="entry name" value="ASKHA_NBD_actin"/>
    <property type="match status" value="1"/>
</dbReference>
<dbReference type="FunFam" id="3.30.420.40:FF:000291">
    <property type="entry name" value="Actin, alpha skeletal muscle"/>
    <property type="match status" value="1"/>
</dbReference>
<dbReference type="FunFam" id="3.90.640.10:FF:000001">
    <property type="entry name" value="Actin, muscle"/>
    <property type="match status" value="1"/>
</dbReference>
<dbReference type="FunFam" id="3.30.420.40:FF:000404">
    <property type="entry name" value="Major actin"/>
    <property type="match status" value="1"/>
</dbReference>
<dbReference type="FunFam" id="3.30.420.40:FF:000058">
    <property type="entry name" value="Putative actin-related protein 5"/>
    <property type="match status" value="1"/>
</dbReference>
<dbReference type="Gene3D" id="3.30.420.40">
    <property type="match status" value="2"/>
</dbReference>
<dbReference type="Gene3D" id="3.90.640.10">
    <property type="entry name" value="Actin, Chain A, domain 4"/>
    <property type="match status" value="1"/>
</dbReference>
<dbReference type="InterPro" id="IPR004000">
    <property type="entry name" value="Actin"/>
</dbReference>
<dbReference type="InterPro" id="IPR020902">
    <property type="entry name" value="Actin/actin-like_CS"/>
</dbReference>
<dbReference type="InterPro" id="IPR004001">
    <property type="entry name" value="Actin_CS"/>
</dbReference>
<dbReference type="InterPro" id="IPR043129">
    <property type="entry name" value="ATPase_NBD"/>
</dbReference>
<dbReference type="PANTHER" id="PTHR11937">
    <property type="entry name" value="ACTIN"/>
    <property type="match status" value="1"/>
</dbReference>
<dbReference type="Pfam" id="PF00022">
    <property type="entry name" value="Actin"/>
    <property type="match status" value="1"/>
</dbReference>
<dbReference type="PRINTS" id="PR00190">
    <property type="entry name" value="ACTIN"/>
</dbReference>
<dbReference type="SMART" id="SM00268">
    <property type="entry name" value="ACTIN"/>
    <property type="match status" value="1"/>
</dbReference>
<dbReference type="SUPFAM" id="SSF53067">
    <property type="entry name" value="Actin-like ATPase domain"/>
    <property type="match status" value="2"/>
</dbReference>
<dbReference type="PROSITE" id="PS00406">
    <property type="entry name" value="ACTINS_1"/>
    <property type="match status" value="1"/>
</dbReference>
<dbReference type="PROSITE" id="PS00432">
    <property type="entry name" value="ACTINS_2"/>
    <property type="match status" value="1"/>
</dbReference>
<dbReference type="PROSITE" id="PS01132">
    <property type="entry name" value="ACTINS_ACT_LIKE"/>
    <property type="match status" value="1"/>
</dbReference>
<organism>
    <name type="scientific">Solanum tuberosum</name>
    <name type="common">Potato</name>
    <dbReference type="NCBI Taxonomy" id="4113"/>
    <lineage>
        <taxon>Eukaryota</taxon>
        <taxon>Viridiplantae</taxon>
        <taxon>Streptophyta</taxon>
        <taxon>Embryophyta</taxon>
        <taxon>Tracheophyta</taxon>
        <taxon>Spermatophyta</taxon>
        <taxon>Magnoliopsida</taxon>
        <taxon>eudicotyledons</taxon>
        <taxon>Gunneridae</taxon>
        <taxon>Pentapetalae</taxon>
        <taxon>asterids</taxon>
        <taxon>lamiids</taxon>
        <taxon>Solanales</taxon>
        <taxon>Solanaceae</taxon>
        <taxon>Solanoideae</taxon>
        <taxon>Solaneae</taxon>
        <taxon>Solanum</taxon>
    </lineage>
</organism>
<comment type="function">
    <text>Actins are highly conserved proteins that are involved in various types of cell motility and are ubiquitously expressed in all eukaryotic cells. Essential component of cell cytoskeleton; plays an important role in cytoplasmic streaming, cell shape determination, cell division, organelle movement and extension growth.</text>
</comment>
<comment type="catalytic activity">
    <reaction evidence="1">
        <text>ATP + H2O = ADP + phosphate + H(+)</text>
        <dbReference type="Rhea" id="RHEA:13065"/>
        <dbReference type="ChEBI" id="CHEBI:15377"/>
        <dbReference type="ChEBI" id="CHEBI:15378"/>
        <dbReference type="ChEBI" id="CHEBI:30616"/>
        <dbReference type="ChEBI" id="CHEBI:43474"/>
        <dbReference type="ChEBI" id="CHEBI:456216"/>
    </reaction>
</comment>
<comment type="subcellular location">
    <subcellularLocation>
        <location>Cytoplasm</location>
        <location>Cytoskeleton</location>
    </subcellularLocation>
</comment>
<comment type="miscellaneous">
    <text>There are at least 13 actin genes in potato.</text>
</comment>
<comment type="similarity">
    <text evidence="2">Belongs to the actin family.</text>
</comment>
<protein>
    <recommendedName>
        <fullName>Actin-58</fullName>
        <ecNumber evidence="1">3.6.4.-</ecNumber>
    </recommendedName>
</protein>